<evidence type="ECO:0000255" key="1">
    <source>
        <dbReference type="HAMAP-Rule" id="MF_00379"/>
    </source>
</evidence>
<comment type="function">
    <text evidence="1">Exhibits a very high intrinsic GTPase hydrolysis rate. Involved in the addition of a carboxymethylaminomethyl (cmnm) group at the wobble position (U34) of certain tRNAs, forming tRNA-cmnm(5)s(2)U34.</text>
</comment>
<comment type="cofactor">
    <cofactor evidence="1">
        <name>K(+)</name>
        <dbReference type="ChEBI" id="CHEBI:29103"/>
    </cofactor>
    <text evidence="1">Binds 1 potassium ion per subunit.</text>
</comment>
<comment type="subunit">
    <text evidence="1">Homodimer. Heterotetramer of two MnmE and two MnmG subunits.</text>
</comment>
<comment type="subcellular location">
    <subcellularLocation>
        <location evidence="1">Cytoplasm</location>
    </subcellularLocation>
</comment>
<comment type="similarity">
    <text evidence="1">Belongs to the TRAFAC class TrmE-Era-EngA-EngB-Septin-like GTPase superfamily. TrmE GTPase family.</text>
</comment>
<dbReference type="EC" id="3.6.-.-" evidence="1"/>
<dbReference type="EMBL" id="CP000901">
    <property type="protein sequence ID" value="ABX87995.1"/>
    <property type="molecule type" value="Genomic_DNA"/>
</dbReference>
<dbReference type="RefSeq" id="WP_002220740.1">
    <property type="nucleotide sequence ID" value="NZ_CP009935.1"/>
</dbReference>
<dbReference type="SMR" id="A9R5S1"/>
<dbReference type="GeneID" id="57974621"/>
<dbReference type="KEGG" id="ypg:YpAngola_A4183"/>
<dbReference type="PATRIC" id="fig|349746.12.peg.919"/>
<dbReference type="GO" id="GO:0005829">
    <property type="term" value="C:cytosol"/>
    <property type="evidence" value="ECO:0007669"/>
    <property type="project" value="TreeGrafter"/>
</dbReference>
<dbReference type="GO" id="GO:0005525">
    <property type="term" value="F:GTP binding"/>
    <property type="evidence" value="ECO:0007669"/>
    <property type="project" value="UniProtKB-UniRule"/>
</dbReference>
<dbReference type="GO" id="GO:0003924">
    <property type="term" value="F:GTPase activity"/>
    <property type="evidence" value="ECO:0007669"/>
    <property type="project" value="UniProtKB-UniRule"/>
</dbReference>
<dbReference type="GO" id="GO:0046872">
    <property type="term" value="F:metal ion binding"/>
    <property type="evidence" value="ECO:0007669"/>
    <property type="project" value="UniProtKB-KW"/>
</dbReference>
<dbReference type="GO" id="GO:0030488">
    <property type="term" value="P:tRNA methylation"/>
    <property type="evidence" value="ECO:0007669"/>
    <property type="project" value="TreeGrafter"/>
</dbReference>
<dbReference type="GO" id="GO:0002098">
    <property type="term" value="P:tRNA wobble uridine modification"/>
    <property type="evidence" value="ECO:0007669"/>
    <property type="project" value="TreeGrafter"/>
</dbReference>
<dbReference type="CDD" id="cd04164">
    <property type="entry name" value="trmE"/>
    <property type="match status" value="1"/>
</dbReference>
<dbReference type="CDD" id="cd14858">
    <property type="entry name" value="TrmE_N"/>
    <property type="match status" value="1"/>
</dbReference>
<dbReference type="FunFam" id="3.30.1360.120:FF:000001">
    <property type="entry name" value="tRNA modification GTPase MnmE"/>
    <property type="match status" value="1"/>
</dbReference>
<dbReference type="FunFam" id="3.40.50.300:FF:000249">
    <property type="entry name" value="tRNA modification GTPase MnmE"/>
    <property type="match status" value="1"/>
</dbReference>
<dbReference type="Gene3D" id="3.40.50.300">
    <property type="entry name" value="P-loop containing nucleotide triphosphate hydrolases"/>
    <property type="match status" value="1"/>
</dbReference>
<dbReference type="Gene3D" id="3.30.1360.120">
    <property type="entry name" value="Probable tRNA modification gtpase trme, domain 1"/>
    <property type="match status" value="1"/>
</dbReference>
<dbReference type="Gene3D" id="1.20.120.430">
    <property type="entry name" value="tRNA modification GTPase MnmE domain 2"/>
    <property type="match status" value="1"/>
</dbReference>
<dbReference type="HAMAP" id="MF_00379">
    <property type="entry name" value="GTPase_MnmE"/>
    <property type="match status" value="1"/>
</dbReference>
<dbReference type="InterPro" id="IPR031168">
    <property type="entry name" value="G_TrmE"/>
</dbReference>
<dbReference type="InterPro" id="IPR006073">
    <property type="entry name" value="GTP-bd"/>
</dbReference>
<dbReference type="InterPro" id="IPR018948">
    <property type="entry name" value="GTP-bd_TrmE_N"/>
</dbReference>
<dbReference type="InterPro" id="IPR004520">
    <property type="entry name" value="GTPase_MnmE"/>
</dbReference>
<dbReference type="InterPro" id="IPR027368">
    <property type="entry name" value="MnmE_dom2"/>
</dbReference>
<dbReference type="InterPro" id="IPR025867">
    <property type="entry name" value="MnmE_helical"/>
</dbReference>
<dbReference type="InterPro" id="IPR027417">
    <property type="entry name" value="P-loop_NTPase"/>
</dbReference>
<dbReference type="InterPro" id="IPR005225">
    <property type="entry name" value="Small_GTP-bd"/>
</dbReference>
<dbReference type="InterPro" id="IPR027266">
    <property type="entry name" value="TrmE/GcvT_dom1"/>
</dbReference>
<dbReference type="NCBIfam" id="TIGR00450">
    <property type="entry name" value="mnmE_trmE_thdF"/>
    <property type="match status" value="1"/>
</dbReference>
<dbReference type="NCBIfam" id="NF003661">
    <property type="entry name" value="PRK05291.1-3"/>
    <property type="match status" value="1"/>
</dbReference>
<dbReference type="NCBIfam" id="TIGR00231">
    <property type="entry name" value="small_GTP"/>
    <property type="match status" value="1"/>
</dbReference>
<dbReference type="PANTHER" id="PTHR42714">
    <property type="entry name" value="TRNA MODIFICATION GTPASE GTPBP3"/>
    <property type="match status" value="1"/>
</dbReference>
<dbReference type="PANTHER" id="PTHR42714:SF2">
    <property type="entry name" value="TRNA MODIFICATION GTPASE GTPBP3, MITOCHONDRIAL"/>
    <property type="match status" value="1"/>
</dbReference>
<dbReference type="Pfam" id="PF01926">
    <property type="entry name" value="MMR_HSR1"/>
    <property type="match status" value="1"/>
</dbReference>
<dbReference type="Pfam" id="PF12631">
    <property type="entry name" value="MnmE_helical"/>
    <property type="match status" value="1"/>
</dbReference>
<dbReference type="Pfam" id="PF10396">
    <property type="entry name" value="TrmE_N"/>
    <property type="match status" value="1"/>
</dbReference>
<dbReference type="SUPFAM" id="SSF52540">
    <property type="entry name" value="P-loop containing nucleoside triphosphate hydrolases"/>
    <property type="match status" value="1"/>
</dbReference>
<dbReference type="SUPFAM" id="SSF116878">
    <property type="entry name" value="TrmE connector domain"/>
    <property type="match status" value="1"/>
</dbReference>
<dbReference type="PROSITE" id="PS51709">
    <property type="entry name" value="G_TRME"/>
    <property type="match status" value="1"/>
</dbReference>
<reference key="1">
    <citation type="journal article" date="2010" name="J. Bacteriol.">
        <title>Genome sequence of the deep-rooted Yersinia pestis strain Angola reveals new insights into the evolution and pangenome of the plague bacterium.</title>
        <authorList>
            <person name="Eppinger M."/>
            <person name="Worsham P.L."/>
            <person name="Nikolich M.P."/>
            <person name="Riley D.R."/>
            <person name="Sebastian Y."/>
            <person name="Mou S."/>
            <person name="Achtman M."/>
            <person name="Lindler L.E."/>
            <person name="Ravel J."/>
        </authorList>
    </citation>
    <scope>NUCLEOTIDE SEQUENCE [LARGE SCALE GENOMIC DNA]</scope>
    <source>
        <strain>Angola</strain>
    </source>
</reference>
<name>MNME_YERPG</name>
<protein>
    <recommendedName>
        <fullName evidence="1">tRNA modification GTPase MnmE</fullName>
        <ecNumber evidence="1">3.6.-.-</ecNumber>
    </recommendedName>
</protein>
<accession>A9R5S1</accession>
<feature type="chain" id="PRO_1000197067" description="tRNA modification GTPase MnmE">
    <location>
        <begin position="1"/>
        <end position="454"/>
    </location>
</feature>
<feature type="domain" description="TrmE-type G">
    <location>
        <begin position="216"/>
        <end position="377"/>
    </location>
</feature>
<feature type="binding site" evidence="1">
    <location>
        <position position="23"/>
    </location>
    <ligand>
        <name>(6S)-5-formyl-5,6,7,8-tetrahydrofolate</name>
        <dbReference type="ChEBI" id="CHEBI:57457"/>
    </ligand>
</feature>
<feature type="binding site" evidence="1">
    <location>
        <position position="80"/>
    </location>
    <ligand>
        <name>(6S)-5-formyl-5,6,7,8-tetrahydrofolate</name>
        <dbReference type="ChEBI" id="CHEBI:57457"/>
    </ligand>
</feature>
<feature type="binding site" evidence="1">
    <location>
        <position position="120"/>
    </location>
    <ligand>
        <name>(6S)-5-formyl-5,6,7,8-tetrahydrofolate</name>
        <dbReference type="ChEBI" id="CHEBI:57457"/>
    </ligand>
</feature>
<feature type="binding site" evidence="1">
    <location>
        <begin position="226"/>
        <end position="231"/>
    </location>
    <ligand>
        <name>GTP</name>
        <dbReference type="ChEBI" id="CHEBI:37565"/>
    </ligand>
</feature>
<feature type="binding site" evidence="1">
    <location>
        <position position="226"/>
    </location>
    <ligand>
        <name>K(+)</name>
        <dbReference type="ChEBI" id="CHEBI:29103"/>
    </ligand>
</feature>
<feature type="binding site" evidence="1">
    <location>
        <position position="230"/>
    </location>
    <ligand>
        <name>Mg(2+)</name>
        <dbReference type="ChEBI" id="CHEBI:18420"/>
    </ligand>
</feature>
<feature type="binding site" evidence="1">
    <location>
        <begin position="245"/>
        <end position="251"/>
    </location>
    <ligand>
        <name>GTP</name>
        <dbReference type="ChEBI" id="CHEBI:37565"/>
    </ligand>
</feature>
<feature type="binding site" evidence="1">
    <location>
        <position position="245"/>
    </location>
    <ligand>
        <name>K(+)</name>
        <dbReference type="ChEBI" id="CHEBI:29103"/>
    </ligand>
</feature>
<feature type="binding site" evidence="1">
    <location>
        <position position="247"/>
    </location>
    <ligand>
        <name>K(+)</name>
        <dbReference type="ChEBI" id="CHEBI:29103"/>
    </ligand>
</feature>
<feature type="binding site" evidence="1">
    <location>
        <position position="250"/>
    </location>
    <ligand>
        <name>K(+)</name>
        <dbReference type="ChEBI" id="CHEBI:29103"/>
    </ligand>
</feature>
<feature type="binding site" evidence="1">
    <location>
        <position position="251"/>
    </location>
    <ligand>
        <name>Mg(2+)</name>
        <dbReference type="ChEBI" id="CHEBI:18420"/>
    </ligand>
</feature>
<feature type="binding site" evidence="1">
    <location>
        <begin position="270"/>
        <end position="273"/>
    </location>
    <ligand>
        <name>GTP</name>
        <dbReference type="ChEBI" id="CHEBI:37565"/>
    </ligand>
</feature>
<feature type="binding site" evidence="1">
    <location>
        <begin position="335"/>
        <end position="338"/>
    </location>
    <ligand>
        <name>GTP</name>
        <dbReference type="ChEBI" id="CHEBI:37565"/>
    </ligand>
</feature>
<feature type="binding site" evidence="1">
    <location>
        <begin position="358"/>
        <end position="360"/>
    </location>
    <ligand>
        <name>GTP</name>
        <dbReference type="ChEBI" id="CHEBI:37565"/>
    </ligand>
</feature>
<feature type="binding site" evidence="1">
    <location>
        <position position="454"/>
    </location>
    <ligand>
        <name>(6S)-5-formyl-5,6,7,8-tetrahydrofolate</name>
        <dbReference type="ChEBI" id="CHEBI:57457"/>
    </ligand>
</feature>
<sequence length="454" mass="49037">MSTTDTIVAQATPPGRGGVGILRVSGRAASEVAHAVLGKLPKPRYADYLPFKDVDGSTLDQGIALYFPGPNSFTGEDVLELQGHGGPVILDLLLKRILALPGLRIARPGEFSERAFLNDKLDLAQAEAIADLIDASSEQAARSAVNSLQGAFSARIHQLVEALTHLRIYVEAAIDFPDEEIDFLSDGKIEGQLNGVMADLEQVRTEARQGSLLREGMKVVIAGRPNAGKSSLLNALAGREAAIVTDIAGTTRDVLREHIHIDGMPLHIIDTAGLREANDEVERIGIERAWNEIEQADRVLFMVDGTTTDATEPAAIWPEFMARLPATLPITVVRNKADITGETLGLTKVNGHSLIRLSARTGEGIDLLRDHLKQSMGFTSNTEGGFLARRRHLQALETAARHLIQGHEQLVSAYAGELLAEELRLAQQSLSEITGEFSSDDLLGRIFSSFCIGK</sequence>
<proteinExistence type="inferred from homology"/>
<keyword id="KW-0963">Cytoplasm</keyword>
<keyword id="KW-0342">GTP-binding</keyword>
<keyword id="KW-0378">Hydrolase</keyword>
<keyword id="KW-0460">Magnesium</keyword>
<keyword id="KW-0479">Metal-binding</keyword>
<keyword id="KW-0547">Nucleotide-binding</keyword>
<keyword id="KW-0630">Potassium</keyword>
<keyword id="KW-0819">tRNA processing</keyword>
<organism>
    <name type="scientific">Yersinia pestis bv. Antiqua (strain Angola)</name>
    <dbReference type="NCBI Taxonomy" id="349746"/>
    <lineage>
        <taxon>Bacteria</taxon>
        <taxon>Pseudomonadati</taxon>
        <taxon>Pseudomonadota</taxon>
        <taxon>Gammaproteobacteria</taxon>
        <taxon>Enterobacterales</taxon>
        <taxon>Yersiniaceae</taxon>
        <taxon>Yersinia</taxon>
    </lineage>
</organism>
<gene>
    <name evidence="1" type="primary">mnmE</name>
    <name evidence="1" type="synonym">trmE</name>
    <name type="ordered locus">YpAngola_A4183</name>
</gene>